<protein>
    <recommendedName>
        <fullName evidence="2">Enhancer of yellow 2 transcription factor</fullName>
    </recommendedName>
</protein>
<evidence type="ECO:0000250" key="1"/>
<evidence type="ECO:0000255" key="2">
    <source>
        <dbReference type="HAMAP-Rule" id="MF_03046"/>
    </source>
</evidence>
<evidence type="ECO:0000256" key="3">
    <source>
        <dbReference type="SAM" id="MobiDB-lite"/>
    </source>
</evidence>
<feature type="chain" id="PRO_0000367562" description="Enhancer of yellow 2 transcription factor">
    <location>
        <begin position="1"/>
        <end position="119"/>
    </location>
</feature>
<feature type="region of interest" description="Disordered" evidence="3">
    <location>
        <begin position="93"/>
        <end position="119"/>
    </location>
</feature>
<feature type="compositionally biased region" description="Acidic residues" evidence="3">
    <location>
        <begin position="96"/>
        <end position="119"/>
    </location>
</feature>
<accession>B4N1G8</accession>
<dbReference type="EMBL" id="CH963925">
    <property type="protein sequence ID" value="EDW78207.1"/>
    <property type="molecule type" value="Genomic_DNA"/>
</dbReference>
<dbReference type="RefSeq" id="XP_002067221.2">
    <property type="nucleotide sequence ID" value="XM_002067185.2"/>
</dbReference>
<dbReference type="SMR" id="B4N1G8"/>
<dbReference type="STRING" id="7260.B4N1G8"/>
<dbReference type="EnsemblMetazoa" id="FBtr0246954">
    <property type="protein sequence ID" value="FBpp0245446"/>
    <property type="gene ID" value="FBgn0218305"/>
</dbReference>
<dbReference type="EnsemblMetazoa" id="XM_002067185.4">
    <property type="protein sequence ID" value="XP_002067221.4"/>
    <property type="gene ID" value="LOC6644730"/>
</dbReference>
<dbReference type="GeneID" id="6644730"/>
<dbReference type="KEGG" id="dwi:6644730"/>
<dbReference type="CTD" id="45848"/>
<dbReference type="eggNOG" id="KOG4479">
    <property type="taxonomic scope" value="Eukaryota"/>
</dbReference>
<dbReference type="HOGENOM" id="CLU_134052_1_2_1"/>
<dbReference type="OMA" id="CHNTIKE"/>
<dbReference type="OrthoDB" id="6221744at2759"/>
<dbReference type="PhylomeDB" id="B4N1G8"/>
<dbReference type="Proteomes" id="UP000007798">
    <property type="component" value="Unassembled WGS sequence"/>
</dbReference>
<dbReference type="GO" id="GO:0005737">
    <property type="term" value="C:cytoplasm"/>
    <property type="evidence" value="ECO:0007669"/>
    <property type="project" value="UniProtKB-SubCell"/>
</dbReference>
<dbReference type="GO" id="GO:0071819">
    <property type="term" value="C:DUBm complex"/>
    <property type="evidence" value="ECO:0007669"/>
    <property type="project" value="UniProtKB-UniRule"/>
</dbReference>
<dbReference type="GO" id="GO:0034399">
    <property type="term" value="C:nuclear periphery"/>
    <property type="evidence" value="ECO:0007669"/>
    <property type="project" value="EnsemblMetazoa"/>
</dbReference>
<dbReference type="GO" id="GO:0005643">
    <property type="term" value="C:nuclear pore"/>
    <property type="evidence" value="ECO:0000250"/>
    <property type="project" value="UniProtKB"/>
</dbReference>
<dbReference type="GO" id="GO:0005654">
    <property type="term" value="C:nucleoplasm"/>
    <property type="evidence" value="ECO:0007669"/>
    <property type="project" value="UniProtKB-SubCell"/>
</dbReference>
<dbReference type="GO" id="GO:0000124">
    <property type="term" value="C:SAGA complex"/>
    <property type="evidence" value="ECO:0000250"/>
    <property type="project" value="UniProtKB"/>
</dbReference>
<dbReference type="GO" id="GO:0070390">
    <property type="term" value="C:transcription export complex 2"/>
    <property type="evidence" value="ECO:0007669"/>
    <property type="project" value="UniProtKB-UniRule"/>
</dbReference>
<dbReference type="GO" id="GO:0070742">
    <property type="term" value="F:C2H2 zinc finger domain binding"/>
    <property type="evidence" value="ECO:0007669"/>
    <property type="project" value="EnsemblMetazoa"/>
</dbReference>
<dbReference type="GO" id="GO:0043035">
    <property type="term" value="F:chromatin insulator sequence binding"/>
    <property type="evidence" value="ECO:0000250"/>
    <property type="project" value="UniProtKB"/>
</dbReference>
<dbReference type="GO" id="GO:0001094">
    <property type="term" value="F:TFIID-class transcription factor complex binding"/>
    <property type="evidence" value="ECO:0007669"/>
    <property type="project" value="EnsemblMetazoa"/>
</dbReference>
<dbReference type="GO" id="GO:0003713">
    <property type="term" value="F:transcription coactivator activity"/>
    <property type="evidence" value="ECO:0007669"/>
    <property type="project" value="UniProtKB-UniRule"/>
</dbReference>
<dbReference type="GO" id="GO:0033696">
    <property type="term" value="P:heterochromatin boundary formation"/>
    <property type="evidence" value="ECO:0007669"/>
    <property type="project" value="EnsemblMetazoa"/>
</dbReference>
<dbReference type="GO" id="GO:0006406">
    <property type="term" value="P:mRNA export from nucleus"/>
    <property type="evidence" value="ECO:0000250"/>
    <property type="project" value="UniProtKB"/>
</dbReference>
<dbReference type="GO" id="GO:0016973">
    <property type="term" value="P:poly(A)+ mRNA export from nucleus"/>
    <property type="evidence" value="ECO:0007669"/>
    <property type="project" value="EnsemblMetazoa"/>
</dbReference>
<dbReference type="GO" id="GO:0045944">
    <property type="term" value="P:positive regulation of transcription by RNA polymerase II"/>
    <property type="evidence" value="ECO:0000250"/>
    <property type="project" value="UniProtKB"/>
</dbReference>
<dbReference type="GO" id="GO:0015031">
    <property type="term" value="P:protein transport"/>
    <property type="evidence" value="ECO:0007669"/>
    <property type="project" value="UniProtKB-KW"/>
</dbReference>
<dbReference type="GO" id="GO:0006368">
    <property type="term" value="P:transcription elongation by RNA polymerase II"/>
    <property type="evidence" value="ECO:0007669"/>
    <property type="project" value="UniProtKB-UniRule"/>
</dbReference>
<dbReference type="FunFam" id="1.10.246.140:FF:000002">
    <property type="entry name" value="Enhancer of yellow 2 transcription factor"/>
    <property type="match status" value="1"/>
</dbReference>
<dbReference type="Gene3D" id="1.10.246.140">
    <property type="match status" value="1"/>
</dbReference>
<dbReference type="HAMAP" id="MF_03046">
    <property type="entry name" value="ENY2_Sus1"/>
    <property type="match status" value="1"/>
</dbReference>
<dbReference type="InterPro" id="IPR018783">
    <property type="entry name" value="TF_ENY2"/>
</dbReference>
<dbReference type="InterPro" id="IPR038212">
    <property type="entry name" value="TF_EnY2_sf"/>
</dbReference>
<dbReference type="PANTHER" id="PTHR12514">
    <property type="entry name" value="ENHANCER OF YELLOW 2 TRANSCRIPTION FACTOR"/>
    <property type="match status" value="1"/>
</dbReference>
<dbReference type="Pfam" id="PF10163">
    <property type="entry name" value="EnY2"/>
    <property type="match status" value="1"/>
</dbReference>
<sequence length="119" mass="13398">MTVSNTVDQYTVLTGDRSKIKDLLCNRLTECGWRDEVRLLCRNILMEKAVAGAVTSNSNLTLEQLITEVTPKARTLVPDAVKKELLMKIRTILTENETEGTDNHDDDEDDEDENGTEDN</sequence>
<gene>
    <name evidence="2" type="primary">e(y)2</name>
    <name type="ORF">GK16303</name>
</gene>
<comment type="function">
    <text evidence="1">Involved in mRNA export coupled transcription activation by association with both the AMEX and the SAGA complexes. The SAGA complex is a multiprotein complex that activates transcription by remodeling chromatin and mediating histone acetylation and deubiquitination. Within the SAGA complex, participates in a subcomplex that specifically deubiquitinates histone H2B. The SAGA complex is recruited to specific gene promoters by activators, where it is required for transcription. Required for nuclear receptor-mediated transactivation. Involved in transcription elongation by recruiting the THO complex onto nascent mRNA. The AMEX complex functions in docking export-competent ribonucleoprotein particles (mRNPs) to the nuclear entrance of the nuclear pore complex (nuclear basket). AMEX participates in mRNA export and accurate chromatin positioning in the nucleus by tethering genes to the nuclear periphery (By similarity).</text>
</comment>
<comment type="subunit">
    <text evidence="2">Component of the nuclear pore complex (NPC)-associated AMEX complex (anchoring and mRNA export complex), composed of at least e(y)2 and xmas-2. Component of the SAGA transcription coactivator-HAT complexes, at least composed of Ada2b, e(y)2, Pcaf/Gcn5, Taf10 and Nipped-A/Trrap. Within the SAGA complex, e(y)2, Sgf11, and not/nonstop form an additional subcomplex of SAGA called the DUB module (deubiquitination module). Component of the THO complex, composed of at least e(y)2, HPR1, THO2, THOC5, THOC6 and THOC7. Interacts with e(y)1. Interacts with su(Hw) (via zinc fingers). Interacts with xmas-2; required for localization to the nuclear periphery. Interacts with the nuclear pore complex (NPC).</text>
</comment>
<comment type="subcellular location">
    <subcellularLocation>
        <location evidence="2">Nucleus</location>
        <location evidence="2">Nucleoplasm</location>
    </subcellularLocation>
    <subcellularLocation>
        <location evidence="2">Cytoplasm</location>
    </subcellularLocation>
</comment>
<comment type="similarity">
    <text evidence="2">Belongs to the ENY2 family.</text>
</comment>
<name>ENY2_DROWI</name>
<reference key="1">
    <citation type="journal article" date="2007" name="Nature">
        <title>Evolution of genes and genomes on the Drosophila phylogeny.</title>
        <authorList>
            <consortium name="Drosophila 12 genomes consortium"/>
        </authorList>
    </citation>
    <scope>NUCLEOTIDE SEQUENCE [LARGE SCALE GENOMIC DNA]</scope>
    <source>
        <strain>Tucson 14030-0811.24</strain>
    </source>
</reference>
<keyword id="KW-0010">Activator</keyword>
<keyword id="KW-0156">Chromatin regulator</keyword>
<keyword id="KW-0963">Cytoplasm</keyword>
<keyword id="KW-0509">mRNA transport</keyword>
<keyword id="KW-0539">Nucleus</keyword>
<keyword id="KW-0653">Protein transport</keyword>
<keyword id="KW-1185">Reference proteome</keyword>
<keyword id="KW-0804">Transcription</keyword>
<keyword id="KW-0805">Transcription regulation</keyword>
<keyword id="KW-0811">Translocation</keyword>
<keyword id="KW-0813">Transport</keyword>
<organism>
    <name type="scientific">Drosophila willistoni</name>
    <name type="common">Fruit fly</name>
    <dbReference type="NCBI Taxonomy" id="7260"/>
    <lineage>
        <taxon>Eukaryota</taxon>
        <taxon>Metazoa</taxon>
        <taxon>Ecdysozoa</taxon>
        <taxon>Arthropoda</taxon>
        <taxon>Hexapoda</taxon>
        <taxon>Insecta</taxon>
        <taxon>Pterygota</taxon>
        <taxon>Neoptera</taxon>
        <taxon>Endopterygota</taxon>
        <taxon>Diptera</taxon>
        <taxon>Brachycera</taxon>
        <taxon>Muscomorpha</taxon>
        <taxon>Ephydroidea</taxon>
        <taxon>Drosophilidae</taxon>
        <taxon>Drosophila</taxon>
        <taxon>Sophophora</taxon>
    </lineage>
</organism>
<proteinExistence type="inferred from homology"/>